<keyword id="KW-0686">Riboflavin biosynthesis</keyword>
<keyword id="KW-0808">Transferase</keyword>
<proteinExistence type="inferred from homology"/>
<feature type="chain" id="PRO_1000195514" description="6,7-dimethyl-8-ribityllumazine synthase">
    <location>
        <begin position="1"/>
        <end position="155"/>
    </location>
</feature>
<feature type="active site" description="Proton donor" evidence="1">
    <location>
        <position position="88"/>
    </location>
</feature>
<feature type="binding site" evidence="1">
    <location>
        <position position="22"/>
    </location>
    <ligand>
        <name>5-amino-6-(D-ribitylamino)uracil</name>
        <dbReference type="ChEBI" id="CHEBI:15934"/>
    </ligand>
</feature>
<feature type="binding site" evidence="1">
    <location>
        <begin position="56"/>
        <end position="58"/>
    </location>
    <ligand>
        <name>5-amino-6-(D-ribitylamino)uracil</name>
        <dbReference type="ChEBI" id="CHEBI:15934"/>
    </ligand>
</feature>
<feature type="binding site" evidence="1">
    <location>
        <begin position="80"/>
        <end position="82"/>
    </location>
    <ligand>
        <name>5-amino-6-(D-ribitylamino)uracil</name>
        <dbReference type="ChEBI" id="CHEBI:15934"/>
    </ligand>
</feature>
<feature type="binding site" evidence="1">
    <location>
        <begin position="85"/>
        <end position="86"/>
    </location>
    <ligand>
        <name>(2S)-2-hydroxy-3-oxobutyl phosphate</name>
        <dbReference type="ChEBI" id="CHEBI:58830"/>
    </ligand>
</feature>
<feature type="binding site" evidence="1">
    <location>
        <position position="113"/>
    </location>
    <ligand>
        <name>5-amino-6-(D-ribitylamino)uracil</name>
        <dbReference type="ChEBI" id="CHEBI:15934"/>
    </ligand>
</feature>
<feature type="binding site" evidence="1">
    <location>
        <position position="127"/>
    </location>
    <ligand>
        <name>(2S)-2-hydroxy-3-oxobutyl phosphate</name>
        <dbReference type="ChEBI" id="CHEBI:58830"/>
    </ligand>
</feature>
<name>RISB_STRZP</name>
<dbReference type="EC" id="2.5.1.78" evidence="1"/>
<dbReference type="EMBL" id="CP000920">
    <property type="protein sequence ID" value="ACO20967.1"/>
    <property type="molecule type" value="Genomic_DNA"/>
</dbReference>
<dbReference type="SMR" id="C1CI69"/>
<dbReference type="KEGG" id="spp:SPP_0232"/>
<dbReference type="HOGENOM" id="CLU_089358_1_1_9"/>
<dbReference type="UniPathway" id="UPA00275">
    <property type="reaction ID" value="UER00404"/>
</dbReference>
<dbReference type="GO" id="GO:0005829">
    <property type="term" value="C:cytosol"/>
    <property type="evidence" value="ECO:0007669"/>
    <property type="project" value="TreeGrafter"/>
</dbReference>
<dbReference type="GO" id="GO:0009349">
    <property type="term" value="C:riboflavin synthase complex"/>
    <property type="evidence" value="ECO:0007669"/>
    <property type="project" value="InterPro"/>
</dbReference>
<dbReference type="GO" id="GO:0000906">
    <property type="term" value="F:6,7-dimethyl-8-ribityllumazine synthase activity"/>
    <property type="evidence" value="ECO:0007669"/>
    <property type="project" value="UniProtKB-UniRule"/>
</dbReference>
<dbReference type="GO" id="GO:0009231">
    <property type="term" value="P:riboflavin biosynthetic process"/>
    <property type="evidence" value="ECO:0007669"/>
    <property type="project" value="UniProtKB-UniRule"/>
</dbReference>
<dbReference type="CDD" id="cd09209">
    <property type="entry name" value="Lumazine_synthase-I"/>
    <property type="match status" value="1"/>
</dbReference>
<dbReference type="FunFam" id="3.40.50.960:FF:000001">
    <property type="entry name" value="6,7-dimethyl-8-ribityllumazine synthase"/>
    <property type="match status" value="1"/>
</dbReference>
<dbReference type="Gene3D" id="3.40.50.960">
    <property type="entry name" value="Lumazine/riboflavin synthase"/>
    <property type="match status" value="1"/>
</dbReference>
<dbReference type="HAMAP" id="MF_00178">
    <property type="entry name" value="Lumazine_synth"/>
    <property type="match status" value="1"/>
</dbReference>
<dbReference type="InterPro" id="IPR034964">
    <property type="entry name" value="LS"/>
</dbReference>
<dbReference type="InterPro" id="IPR002180">
    <property type="entry name" value="LS/RS"/>
</dbReference>
<dbReference type="InterPro" id="IPR036467">
    <property type="entry name" value="LS/RS_sf"/>
</dbReference>
<dbReference type="NCBIfam" id="TIGR00114">
    <property type="entry name" value="lumazine-synth"/>
    <property type="match status" value="1"/>
</dbReference>
<dbReference type="NCBIfam" id="NF000812">
    <property type="entry name" value="PRK00061.1-4"/>
    <property type="match status" value="1"/>
</dbReference>
<dbReference type="PANTHER" id="PTHR21058:SF0">
    <property type="entry name" value="6,7-DIMETHYL-8-RIBITYLLUMAZINE SYNTHASE"/>
    <property type="match status" value="1"/>
</dbReference>
<dbReference type="PANTHER" id="PTHR21058">
    <property type="entry name" value="6,7-DIMETHYL-8-RIBITYLLUMAZINE SYNTHASE DMRL SYNTHASE LUMAZINE SYNTHASE"/>
    <property type="match status" value="1"/>
</dbReference>
<dbReference type="Pfam" id="PF00885">
    <property type="entry name" value="DMRL_synthase"/>
    <property type="match status" value="1"/>
</dbReference>
<dbReference type="SUPFAM" id="SSF52121">
    <property type="entry name" value="Lumazine synthase"/>
    <property type="match status" value="1"/>
</dbReference>
<gene>
    <name evidence="1" type="primary">ribH</name>
    <name type="ordered locus">SPP_0232</name>
</gene>
<comment type="function">
    <text evidence="1">Catalyzes the formation of 6,7-dimethyl-8-ribityllumazine by condensation of 5-amino-6-(D-ribitylamino)uracil with 3,4-dihydroxy-2-butanone 4-phosphate. This is the penultimate step in the biosynthesis of riboflavin.</text>
</comment>
<comment type="catalytic activity">
    <reaction evidence="1">
        <text>(2S)-2-hydroxy-3-oxobutyl phosphate + 5-amino-6-(D-ribitylamino)uracil = 6,7-dimethyl-8-(1-D-ribityl)lumazine + phosphate + 2 H2O + H(+)</text>
        <dbReference type="Rhea" id="RHEA:26152"/>
        <dbReference type="ChEBI" id="CHEBI:15377"/>
        <dbReference type="ChEBI" id="CHEBI:15378"/>
        <dbReference type="ChEBI" id="CHEBI:15934"/>
        <dbReference type="ChEBI" id="CHEBI:43474"/>
        <dbReference type="ChEBI" id="CHEBI:58201"/>
        <dbReference type="ChEBI" id="CHEBI:58830"/>
        <dbReference type="EC" id="2.5.1.78"/>
    </reaction>
</comment>
<comment type="pathway">
    <text evidence="1">Cofactor biosynthesis; riboflavin biosynthesis; riboflavin from 2-hydroxy-3-oxobutyl phosphate and 5-amino-6-(D-ribitylamino)uracil: step 1/2.</text>
</comment>
<comment type="similarity">
    <text evidence="1">Belongs to the DMRL synthase family.</text>
</comment>
<protein>
    <recommendedName>
        <fullName evidence="1">6,7-dimethyl-8-ribityllumazine synthase</fullName>
        <shortName evidence="1">DMRL synthase</shortName>
        <shortName evidence="1">LS</shortName>
        <shortName evidence="1">Lumazine synthase</shortName>
        <ecNumber evidence="1">2.5.1.78</ecNumber>
    </recommendedName>
</protein>
<evidence type="ECO:0000255" key="1">
    <source>
        <dbReference type="HAMAP-Rule" id="MF_00178"/>
    </source>
</evidence>
<organism>
    <name type="scientific">Streptococcus pneumoniae (strain P1031)</name>
    <dbReference type="NCBI Taxonomy" id="488223"/>
    <lineage>
        <taxon>Bacteria</taxon>
        <taxon>Bacillati</taxon>
        <taxon>Bacillota</taxon>
        <taxon>Bacilli</taxon>
        <taxon>Lactobacillales</taxon>
        <taxon>Streptococcaceae</taxon>
        <taxon>Streptococcus</taxon>
    </lineage>
</organism>
<accession>C1CI69</accession>
<sequence>MNTYEGNLVANNIKIGIVVARFNEFITSKLLSGALDNLKRENVNEKDIEVAWVPGAFEIPLIASKMAKSKKYDAIICLGAVIRGNTSHYDYVCSEVSKGIAQISLNSEIPVMFGVLTTDTIEQAIERAGTKAGNKGSECAQGAIEMVNLIRTLDA</sequence>
<reference key="1">
    <citation type="journal article" date="2010" name="Genome Biol.">
        <title>Structure and dynamics of the pan-genome of Streptococcus pneumoniae and closely related species.</title>
        <authorList>
            <person name="Donati C."/>
            <person name="Hiller N.L."/>
            <person name="Tettelin H."/>
            <person name="Muzzi A."/>
            <person name="Croucher N.J."/>
            <person name="Angiuoli S.V."/>
            <person name="Oggioni M."/>
            <person name="Dunning Hotopp J.C."/>
            <person name="Hu F.Z."/>
            <person name="Riley D.R."/>
            <person name="Covacci A."/>
            <person name="Mitchell T.J."/>
            <person name="Bentley S.D."/>
            <person name="Kilian M."/>
            <person name="Ehrlich G.D."/>
            <person name="Rappuoli R."/>
            <person name="Moxon E.R."/>
            <person name="Masignani V."/>
        </authorList>
    </citation>
    <scope>NUCLEOTIDE SEQUENCE [LARGE SCALE GENOMIC DNA]</scope>
    <source>
        <strain>P1031</strain>
    </source>
</reference>